<sequence length="221" mass="24546">MMKCLFFLCLCLFPILVFSSTFTSQNPINLPSESPVPKPVLDTNGKKLNPNSSYRIISTFWGALGGDVYLGKSPNSDAPCPDGVFRYNSDVGPSGTPVRFIPLSTNIFEDQLLNIQFNIPTVKLCVSYTIWKVGNLNTHLWTMLLETGGTIGKADSSYFKIVKSSKFGYNLLYCPITRPPIVCPFCRDDDFCAKVGVVIQNGKRRLALVNENPLDVLFQEV</sequence>
<protein>
    <recommendedName>
        <fullName>Aspartic protease inhibitor 1</fullName>
        <shortName>pA1</shortName>
    </recommendedName>
    <alternativeName>
        <fullName>STPIA</fullName>
    </alternativeName>
    <alternativeName>
        <fullName>STPID</fullName>
    </alternativeName>
    <alternativeName>
        <fullName>gCDI-A1</fullName>
    </alternativeName>
</protein>
<name>API1_SOLTU</name>
<comment type="function">
    <text>Inhibitor of cathepsin D (aspartic protease). May also inhibit trypsin and chymotrypsin (serine proteases). Protects the plant by inhibiting proteases of invading organisms.</text>
</comment>
<comment type="subcellular location">
    <subcellularLocation>
        <location evidence="1">Vacuole</location>
    </subcellularLocation>
</comment>
<comment type="tissue specificity">
    <text>Tubers, young leaves and flower bud. Not detected in root, stem or mature leaves.</text>
</comment>
<comment type="induction">
    <text>By methyl jasmonate and wounding; but not by sucrose.</text>
</comment>
<comment type="miscellaneous">
    <text>Has a single chain structure.</text>
</comment>
<comment type="similarity">
    <text evidence="3">Belongs to the protease inhibitor I3 (leguminous Kunitz-type inhibitor) family.</text>
</comment>
<accession>Q41480</accession>
<accession>Q41483</accession>
<organism>
    <name type="scientific">Solanum tuberosum</name>
    <name type="common">Potato</name>
    <dbReference type="NCBI Taxonomy" id="4113"/>
    <lineage>
        <taxon>Eukaryota</taxon>
        <taxon>Viridiplantae</taxon>
        <taxon>Streptophyta</taxon>
        <taxon>Embryophyta</taxon>
        <taxon>Tracheophyta</taxon>
        <taxon>Spermatophyta</taxon>
        <taxon>Magnoliopsida</taxon>
        <taxon>eudicotyledons</taxon>
        <taxon>Gunneridae</taxon>
        <taxon>Pentapetalae</taxon>
        <taxon>asterids</taxon>
        <taxon>lamiids</taxon>
        <taxon>Solanales</taxon>
        <taxon>Solanaceae</taxon>
        <taxon>Solanoideae</taxon>
        <taxon>Solaneae</taxon>
        <taxon>Solanum</taxon>
    </lineage>
</organism>
<feature type="signal peptide" evidence="1">
    <location>
        <begin position="1"/>
        <end position="23"/>
    </location>
</feature>
<feature type="propeptide" id="PRO_0000016910" evidence="1">
    <location>
        <begin position="24"/>
        <end position="32"/>
    </location>
</feature>
<feature type="chain" id="PRO_0000016911" description="Aspartic protease inhibitor 1">
    <location>
        <begin position="33"/>
        <end position="221"/>
    </location>
</feature>
<feature type="short sequence motif" description="Vacuolar targeting signal" evidence="1">
    <location>
        <begin position="26"/>
        <end position="31"/>
    </location>
</feature>
<feature type="site" description="Reactive bond for trypsin" evidence="1">
    <location>
        <begin position="99"/>
        <end position="100"/>
    </location>
</feature>
<feature type="site" description="Reactive bond for chymotrypsin" evidence="1">
    <location>
        <begin position="143"/>
        <end position="144"/>
    </location>
</feature>
<feature type="glycosylation site" description="N-linked (GlcNAc...) asparagine" evidence="2">
    <location>
        <position position="51"/>
    </location>
</feature>
<feature type="disulfide bond" evidence="1">
    <location>
        <begin position="80"/>
        <end position="125"/>
    </location>
</feature>
<feature type="disulfide bond" evidence="1">
    <location>
        <begin position="174"/>
        <end position="186"/>
    </location>
</feature>
<dbReference type="EMBL" id="D17328">
    <property type="protein sequence ID" value="BAA04148.1"/>
    <property type="molecule type" value="mRNA"/>
</dbReference>
<dbReference type="EMBL" id="D17331">
    <property type="protein sequence ID" value="BAA04151.1"/>
    <property type="molecule type" value="Genomic_DNA"/>
</dbReference>
<dbReference type="PIR" id="T07411">
    <property type="entry name" value="T07411"/>
</dbReference>
<dbReference type="PIR" id="T07413">
    <property type="entry name" value="T07413"/>
</dbReference>
<dbReference type="SMR" id="Q41480"/>
<dbReference type="MEROPS" id="I03.002"/>
<dbReference type="InParanoid" id="Q41480"/>
<dbReference type="Proteomes" id="UP000011115">
    <property type="component" value="Unassembled WGS sequence"/>
</dbReference>
<dbReference type="ExpressionAtlas" id="Q41480">
    <property type="expression patterns" value="baseline and differential"/>
</dbReference>
<dbReference type="GO" id="GO:0005773">
    <property type="term" value="C:vacuole"/>
    <property type="evidence" value="ECO:0007669"/>
    <property type="project" value="UniProtKB-SubCell"/>
</dbReference>
<dbReference type="GO" id="GO:0019828">
    <property type="term" value="F:aspartic-type endopeptidase inhibitor activity"/>
    <property type="evidence" value="ECO:0007669"/>
    <property type="project" value="UniProtKB-KW"/>
</dbReference>
<dbReference type="GO" id="GO:0004867">
    <property type="term" value="F:serine-type endopeptidase inhibitor activity"/>
    <property type="evidence" value="ECO:0007669"/>
    <property type="project" value="UniProtKB-KW"/>
</dbReference>
<dbReference type="CDD" id="cd23372">
    <property type="entry name" value="beta-trefoil_STI_CPI-like"/>
    <property type="match status" value="1"/>
</dbReference>
<dbReference type="Gene3D" id="2.80.10.50">
    <property type="match status" value="1"/>
</dbReference>
<dbReference type="InterPro" id="IPR011065">
    <property type="entry name" value="Kunitz_inhibitor_STI-like_sf"/>
</dbReference>
<dbReference type="InterPro" id="IPR002160">
    <property type="entry name" value="Prot_inh_Kunz-lg"/>
</dbReference>
<dbReference type="PANTHER" id="PTHR33107">
    <property type="entry name" value="KUNITZ TRYPSIN INHIBITOR 2"/>
    <property type="match status" value="1"/>
</dbReference>
<dbReference type="PANTHER" id="PTHR33107:SF38">
    <property type="entry name" value="SERINE PROTEASE INHIBITOR 5"/>
    <property type="match status" value="1"/>
</dbReference>
<dbReference type="Pfam" id="PF00197">
    <property type="entry name" value="Kunitz_legume"/>
    <property type="match status" value="1"/>
</dbReference>
<dbReference type="PRINTS" id="PR00291">
    <property type="entry name" value="KUNITZINHBTR"/>
</dbReference>
<dbReference type="SMART" id="SM00452">
    <property type="entry name" value="STI"/>
    <property type="match status" value="1"/>
</dbReference>
<dbReference type="SUPFAM" id="SSF50386">
    <property type="entry name" value="STI-like"/>
    <property type="match status" value="1"/>
</dbReference>
<dbReference type="PROSITE" id="PS00283">
    <property type="entry name" value="SOYBEAN_KUNITZ"/>
    <property type="match status" value="1"/>
</dbReference>
<proteinExistence type="evidence at protein level"/>
<evidence type="ECO:0000250" key="1"/>
<evidence type="ECO:0000255" key="2"/>
<evidence type="ECO:0000305" key="3"/>
<reference key="1">
    <citation type="journal article" date="1994" name="Plant Cell Physiol.">
        <title>A family of potato genes that encode Kunitz-type proteinase inhibitors: structural comparisons and differential expression.</title>
        <authorList>
            <person name="Ishikawa A."/>
            <person name="Ohta S."/>
            <person name="Matsuoka K."/>
            <person name="Hattori T."/>
            <person name="Nakamura K."/>
        </authorList>
    </citation>
    <scope>NUCLEOTIDE SEQUENCE [GENOMIC DNA / MRNA]</scope>
    <scope>PROTEIN SEQUENCE OF 33-42</scope>
    <source>
        <strain>cv. Danshaku</strain>
    </source>
</reference>
<keyword id="KW-0062">Aspartic protease inhibitor</keyword>
<keyword id="KW-0903">Direct protein sequencing</keyword>
<keyword id="KW-1015">Disulfide bond</keyword>
<keyword id="KW-0325">Glycoprotein</keyword>
<keyword id="KW-0646">Protease inhibitor</keyword>
<keyword id="KW-1185">Reference proteome</keyword>
<keyword id="KW-0722">Serine protease inhibitor</keyword>
<keyword id="KW-0732">Signal</keyword>
<keyword id="KW-0926">Vacuole</keyword>